<gene>
    <name evidence="1" type="primary">pyrC</name>
    <name type="ordered locus">SSPA1569</name>
</gene>
<keyword id="KW-0378">Hydrolase</keyword>
<keyword id="KW-0479">Metal-binding</keyword>
<keyword id="KW-0665">Pyrimidine biosynthesis</keyword>
<keyword id="KW-0862">Zinc</keyword>
<dbReference type="EC" id="3.5.2.3" evidence="1"/>
<dbReference type="EMBL" id="FM200053">
    <property type="protein sequence ID" value="CAR59755.1"/>
    <property type="molecule type" value="Genomic_DNA"/>
</dbReference>
<dbReference type="RefSeq" id="WP_000126589.1">
    <property type="nucleotide sequence ID" value="NC_011147.1"/>
</dbReference>
<dbReference type="SMR" id="B5BBC6"/>
<dbReference type="KEGG" id="sek:SSPA1569"/>
<dbReference type="HOGENOM" id="CLU_041558_1_0_6"/>
<dbReference type="UniPathway" id="UPA00070">
    <property type="reaction ID" value="UER00117"/>
</dbReference>
<dbReference type="Proteomes" id="UP000001869">
    <property type="component" value="Chromosome"/>
</dbReference>
<dbReference type="GO" id="GO:0005829">
    <property type="term" value="C:cytosol"/>
    <property type="evidence" value="ECO:0007669"/>
    <property type="project" value="TreeGrafter"/>
</dbReference>
<dbReference type="GO" id="GO:0004151">
    <property type="term" value="F:dihydroorotase activity"/>
    <property type="evidence" value="ECO:0007669"/>
    <property type="project" value="UniProtKB-UniRule"/>
</dbReference>
<dbReference type="GO" id="GO:0008270">
    <property type="term" value="F:zinc ion binding"/>
    <property type="evidence" value="ECO:0007669"/>
    <property type="project" value="UniProtKB-UniRule"/>
</dbReference>
<dbReference type="GO" id="GO:0006207">
    <property type="term" value="P:'de novo' pyrimidine nucleobase biosynthetic process"/>
    <property type="evidence" value="ECO:0007669"/>
    <property type="project" value="TreeGrafter"/>
</dbReference>
<dbReference type="GO" id="GO:0044205">
    <property type="term" value="P:'de novo' UMP biosynthetic process"/>
    <property type="evidence" value="ECO:0007669"/>
    <property type="project" value="UniProtKB-UniRule"/>
</dbReference>
<dbReference type="CDD" id="cd01294">
    <property type="entry name" value="DHOase"/>
    <property type="match status" value="1"/>
</dbReference>
<dbReference type="FunFam" id="3.20.20.140:FF:000006">
    <property type="entry name" value="Dihydroorotase"/>
    <property type="match status" value="1"/>
</dbReference>
<dbReference type="Gene3D" id="3.20.20.140">
    <property type="entry name" value="Metal-dependent hydrolases"/>
    <property type="match status" value="1"/>
</dbReference>
<dbReference type="HAMAP" id="MF_00219">
    <property type="entry name" value="PyrC_classII"/>
    <property type="match status" value="1"/>
</dbReference>
<dbReference type="InterPro" id="IPR006680">
    <property type="entry name" value="Amidohydro-rel"/>
</dbReference>
<dbReference type="InterPro" id="IPR004721">
    <property type="entry name" value="DHOdimr"/>
</dbReference>
<dbReference type="InterPro" id="IPR002195">
    <property type="entry name" value="Dihydroorotase_CS"/>
</dbReference>
<dbReference type="InterPro" id="IPR032466">
    <property type="entry name" value="Metal_Hydrolase"/>
</dbReference>
<dbReference type="NCBIfam" id="TIGR00856">
    <property type="entry name" value="pyrC_dimer"/>
    <property type="match status" value="1"/>
</dbReference>
<dbReference type="PANTHER" id="PTHR43137">
    <property type="entry name" value="DIHYDROOROTASE"/>
    <property type="match status" value="1"/>
</dbReference>
<dbReference type="PANTHER" id="PTHR43137:SF1">
    <property type="entry name" value="DIHYDROOROTASE"/>
    <property type="match status" value="1"/>
</dbReference>
<dbReference type="Pfam" id="PF01979">
    <property type="entry name" value="Amidohydro_1"/>
    <property type="match status" value="1"/>
</dbReference>
<dbReference type="PIRSF" id="PIRSF001237">
    <property type="entry name" value="DHOdimr"/>
    <property type="match status" value="1"/>
</dbReference>
<dbReference type="SUPFAM" id="SSF51556">
    <property type="entry name" value="Metallo-dependent hydrolases"/>
    <property type="match status" value="1"/>
</dbReference>
<dbReference type="PROSITE" id="PS00482">
    <property type="entry name" value="DIHYDROOROTASE_1"/>
    <property type="match status" value="1"/>
</dbReference>
<dbReference type="PROSITE" id="PS00483">
    <property type="entry name" value="DIHYDROOROTASE_2"/>
    <property type="match status" value="1"/>
</dbReference>
<protein>
    <recommendedName>
        <fullName evidence="1">Dihydroorotase</fullName>
        <shortName evidence="1">DHOase</shortName>
        <ecNumber evidence="1">3.5.2.3</ecNumber>
    </recommendedName>
</protein>
<organism>
    <name type="scientific">Salmonella paratyphi A (strain AKU_12601)</name>
    <dbReference type="NCBI Taxonomy" id="554290"/>
    <lineage>
        <taxon>Bacteria</taxon>
        <taxon>Pseudomonadati</taxon>
        <taxon>Pseudomonadota</taxon>
        <taxon>Gammaproteobacteria</taxon>
        <taxon>Enterobacterales</taxon>
        <taxon>Enterobacteriaceae</taxon>
        <taxon>Salmonella</taxon>
    </lineage>
</organism>
<evidence type="ECO:0000255" key="1">
    <source>
        <dbReference type="HAMAP-Rule" id="MF_00219"/>
    </source>
</evidence>
<sequence>MTAPSQVLKIRRPDDWHVHLRDGDMLKTVVPYTSEIYGRAIVMPNLASPITTVDAAIAYRQRILDAVPAGHDFTPLMTCYLTDSLDADELERGFHEGVFTAAKLYPANATTNSSHGVTSVDAIMPVLERMEKLGMPLLVHGEVTHADVDIFDREARFIDTVMEPLRQRLTALKVVFEHITTKDAAQYVRDGSDNLAATITPQHLMFNRNDMLVGGIRPHLYCLPILKRNIHQQALRDLVASGFTRAFLGTDSAPHSRHRKETRCGCAGCFNAPSALGSYAAVFEEMNALAHFEAFCSLNGPQFYGLPVNTGWVELVRDEQQIPENIALADDSLVPFLAGETVRWSVKK</sequence>
<reference key="1">
    <citation type="journal article" date="2009" name="BMC Genomics">
        <title>Pseudogene accumulation in the evolutionary histories of Salmonella enterica serovars Paratyphi A and Typhi.</title>
        <authorList>
            <person name="Holt K.E."/>
            <person name="Thomson N.R."/>
            <person name="Wain J."/>
            <person name="Langridge G.C."/>
            <person name="Hasan R."/>
            <person name="Bhutta Z.A."/>
            <person name="Quail M.A."/>
            <person name="Norbertczak H."/>
            <person name="Walker D."/>
            <person name="Simmonds M."/>
            <person name="White B."/>
            <person name="Bason N."/>
            <person name="Mungall K."/>
            <person name="Dougan G."/>
            <person name="Parkhill J."/>
        </authorList>
    </citation>
    <scope>NUCLEOTIDE SEQUENCE [LARGE SCALE GENOMIC DNA]</scope>
    <source>
        <strain>AKU_12601</strain>
    </source>
</reference>
<feature type="chain" id="PRO_1000100061" description="Dihydroorotase">
    <location>
        <begin position="1"/>
        <end position="348"/>
    </location>
</feature>
<feature type="active site" evidence="1">
    <location>
        <position position="251"/>
    </location>
</feature>
<feature type="binding site" evidence="1">
    <location>
        <position position="17"/>
    </location>
    <ligand>
        <name>Zn(2+)</name>
        <dbReference type="ChEBI" id="CHEBI:29105"/>
        <label>1</label>
    </ligand>
</feature>
<feature type="binding site" evidence="1">
    <location>
        <begin position="19"/>
        <end position="21"/>
    </location>
    <ligand>
        <name>substrate</name>
    </ligand>
</feature>
<feature type="binding site" evidence="1">
    <location>
        <position position="19"/>
    </location>
    <ligand>
        <name>Zn(2+)</name>
        <dbReference type="ChEBI" id="CHEBI:29105"/>
        <label>1</label>
    </ligand>
</feature>
<feature type="binding site" evidence="1">
    <location>
        <position position="45"/>
    </location>
    <ligand>
        <name>substrate</name>
    </ligand>
</feature>
<feature type="binding site" description="via carbamate group" evidence="1">
    <location>
        <position position="103"/>
    </location>
    <ligand>
        <name>Zn(2+)</name>
        <dbReference type="ChEBI" id="CHEBI:29105"/>
        <label>1</label>
    </ligand>
</feature>
<feature type="binding site" description="via carbamate group" evidence="1">
    <location>
        <position position="103"/>
    </location>
    <ligand>
        <name>Zn(2+)</name>
        <dbReference type="ChEBI" id="CHEBI:29105"/>
        <label>2</label>
    </ligand>
</feature>
<feature type="binding site" evidence="1">
    <location>
        <position position="140"/>
    </location>
    <ligand>
        <name>substrate</name>
    </ligand>
</feature>
<feature type="binding site" evidence="1">
    <location>
        <position position="140"/>
    </location>
    <ligand>
        <name>Zn(2+)</name>
        <dbReference type="ChEBI" id="CHEBI:29105"/>
        <label>2</label>
    </ligand>
</feature>
<feature type="binding site" evidence="1">
    <location>
        <position position="178"/>
    </location>
    <ligand>
        <name>Zn(2+)</name>
        <dbReference type="ChEBI" id="CHEBI:29105"/>
        <label>2</label>
    </ligand>
</feature>
<feature type="binding site" evidence="1">
    <location>
        <position position="223"/>
    </location>
    <ligand>
        <name>substrate</name>
    </ligand>
</feature>
<feature type="binding site" evidence="1">
    <location>
        <position position="251"/>
    </location>
    <ligand>
        <name>Zn(2+)</name>
        <dbReference type="ChEBI" id="CHEBI:29105"/>
        <label>1</label>
    </ligand>
</feature>
<feature type="binding site" evidence="1">
    <location>
        <position position="255"/>
    </location>
    <ligand>
        <name>substrate</name>
    </ligand>
</feature>
<feature type="binding site" evidence="1">
    <location>
        <position position="267"/>
    </location>
    <ligand>
        <name>substrate</name>
    </ligand>
</feature>
<feature type="modified residue" description="N6-carboxylysine" evidence="1">
    <location>
        <position position="103"/>
    </location>
</feature>
<proteinExistence type="inferred from homology"/>
<name>PYRC_SALPK</name>
<comment type="function">
    <text evidence="1">Catalyzes the reversible cyclization of carbamoyl aspartate to dihydroorotate.</text>
</comment>
<comment type="catalytic activity">
    <reaction evidence="1">
        <text>(S)-dihydroorotate + H2O = N-carbamoyl-L-aspartate + H(+)</text>
        <dbReference type="Rhea" id="RHEA:24296"/>
        <dbReference type="ChEBI" id="CHEBI:15377"/>
        <dbReference type="ChEBI" id="CHEBI:15378"/>
        <dbReference type="ChEBI" id="CHEBI:30864"/>
        <dbReference type="ChEBI" id="CHEBI:32814"/>
        <dbReference type="EC" id="3.5.2.3"/>
    </reaction>
</comment>
<comment type="cofactor">
    <cofactor evidence="1">
        <name>Zn(2+)</name>
        <dbReference type="ChEBI" id="CHEBI:29105"/>
    </cofactor>
    <text evidence="1">Binds 2 Zn(2+) ions per subunit.</text>
</comment>
<comment type="pathway">
    <text evidence="1">Pyrimidine metabolism; UMP biosynthesis via de novo pathway; (S)-dihydroorotate from bicarbonate: step 3/3.</text>
</comment>
<comment type="subunit">
    <text evidence="1">Homodimer.</text>
</comment>
<comment type="similarity">
    <text evidence="1">Belongs to the metallo-dependent hydrolases superfamily. DHOase family. Class II DHOase subfamily.</text>
</comment>
<accession>B5BBC6</accession>